<reference key="1">
    <citation type="submission" date="2008-05" db="EMBL/GenBank/DDBJ databases">
        <title>Complete sequence of Chlorobium limicola DSM 245.</title>
        <authorList>
            <consortium name="US DOE Joint Genome Institute"/>
            <person name="Lucas S."/>
            <person name="Copeland A."/>
            <person name="Lapidus A."/>
            <person name="Glavina del Rio T."/>
            <person name="Dalin E."/>
            <person name="Tice H."/>
            <person name="Bruce D."/>
            <person name="Goodwin L."/>
            <person name="Pitluck S."/>
            <person name="Schmutz J."/>
            <person name="Larimer F."/>
            <person name="Land M."/>
            <person name="Hauser L."/>
            <person name="Kyrpides N."/>
            <person name="Ovchinnikova G."/>
            <person name="Zhao F."/>
            <person name="Li T."/>
            <person name="Liu Z."/>
            <person name="Overmann J."/>
            <person name="Bryant D.A."/>
            <person name="Richardson P."/>
        </authorList>
    </citation>
    <scope>NUCLEOTIDE SEQUENCE [LARGE SCALE GENOMIC DNA]</scope>
    <source>
        <strain>DSM 245 / NBRC 103803 / 6330</strain>
    </source>
</reference>
<evidence type="ECO:0000255" key="1">
    <source>
        <dbReference type="HAMAP-Rule" id="MF_00206"/>
    </source>
</evidence>
<evidence type="ECO:0000255" key="2">
    <source>
        <dbReference type="PROSITE-ProRule" id="PRU01266"/>
    </source>
</evidence>
<protein>
    <recommendedName>
        <fullName evidence="1">Lipoyl synthase</fullName>
        <ecNumber evidence="1">2.8.1.8</ecNumber>
    </recommendedName>
    <alternativeName>
        <fullName evidence="1">Lip-syn</fullName>
        <shortName evidence="1">LS</shortName>
    </alternativeName>
    <alternativeName>
        <fullName evidence="1">Lipoate synthase</fullName>
    </alternativeName>
    <alternativeName>
        <fullName evidence="1">Lipoic acid synthase</fullName>
    </alternativeName>
    <alternativeName>
        <fullName evidence="1">Sulfur insertion protein LipA</fullName>
    </alternativeName>
</protein>
<dbReference type="EC" id="2.8.1.8" evidence="1"/>
<dbReference type="EMBL" id="CP001097">
    <property type="protein sequence ID" value="ACD90280.1"/>
    <property type="molecule type" value="Genomic_DNA"/>
</dbReference>
<dbReference type="RefSeq" id="WP_012466157.1">
    <property type="nucleotide sequence ID" value="NC_010803.1"/>
</dbReference>
<dbReference type="SMR" id="B3ECK5"/>
<dbReference type="STRING" id="290315.Clim_1213"/>
<dbReference type="KEGG" id="cli:Clim_1213"/>
<dbReference type="eggNOG" id="COG0320">
    <property type="taxonomic scope" value="Bacteria"/>
</dbReference>
<dbReference type="HOGENOM" id="CLU_033144_2_1_10"/>
<dbReference type="OrthoDB" id="9787898at2"/>
<dbReference type="UniPathway" id="UPA00538">
    <property type="reaction ID" value="UER00593"/>
</dbReference>
<dbReference type="Proteomes" id="UP000008841">
    <property type="component" value="Chromosome"/>
</dbReference>
<dbReference type="GO" id="GO:0005737">
    <property type="term" value="C:cytoplasm"/>
    <property type="evidence" value="ECO:0007669"/>
    <property type="project" value="UniProtKB-SubCell"/>
</dbReference>
<dbReference type="GO" id="GO:0051539">
    <property type="term" value="F:4 iron, 4 sulfur cluster binding"/>
    <property type="evidence" value="ECO:0007669"/>
    <property type="project" value="UniProtKB-UniRule"/>
</dbReference>
<dbReference type="GO" id="GO:0016992">
    <property type="term" value="F:lipoate synthase activity"/>
    <property type="evidence" value="ECO:0007669"/>
    <property type="project" value="UniProtKB-UniRule"/>
</dbReference>
<dbReference type="GO" id="GO:0046872">
    <property type="term" value="F:metal ion binding"/>
    <property type="evidence" value="ECO:0007669"/>
    <property type="project" value="UniProtKB-KW"/>
</dbReference>
<dbReference type="FunFam" id="3.20.20.70:FF:000040">
    <property type="entry name" value="Lipoyl synthase"/>
    <property type="match status" value="1"/>
</dbReference>
<dbReference type="Gene3D" id="3.20.20.70">
    <property type="entry name" value="Aldolase class I"/>
    <property type="match status" value="1"/>
</dbReference>
<dbReference type="HAMAP" id="MF_00206">
    <property type="entry name" value="Lipoyl_synth"/>
    <property type="match status" value="1"/>
</dbReference>
<dbReference type="InterPro" id="IPR013785">
    <property type="entry name" value="Aldolase_TIM"/>
</dbReference>
<dbReference type="InterPro" id="IPR006638">
    <property type="entry name" value="Elp3/MiaA/NifB-like_rSAM"/>
</dbReference>
<dbReference type="InterPro" id="IPR003698">
    <property type="entry name" value="Lipoyl_synth"/>
</dbReference>
<dbReference type="InterPro" id="IPR007197">
    <property type="entry name" value="rSAM"/>
</dbReference>
<dbReference type="NCBIfam" id="TIGR00510">
    <property type="entry name" value="lipA"/>
    <property type="match status" value="1"/>
</dbReference>
<dbReference type="NCBIfam" id="NF004019">
    <property type="entry name" value="PRK05481.1"/>
    <property type="match status" value="1"/>
</dbReference>
<dbReference type="NCBIfam" id="NF009544">
    <property type="entry name" value="PRK12928.1"/>
    <property type="match status" value="1"/>
</dbReference>
<dbReference type="PANTHER" id="PTHR10949">
    <property type="entry name" value="LIPOYL SYNTHASE"/>
    <property type="match status" value="1"/>
</dbReference>
<dbReference type="PANTHER" id="PTHR10949:SF0">
    <property type="entry name" value="LIPOYL SYNTHASE, MITOCHONDRIAL"/>
    <property type="match status" value="1"/>
</dbReference>
<dbReference type="Pfam" id="PF04055">
    <property type="entry name" value="Radical_SAM"/>
    <property type="match status" value="1"/>
</dbReference>
<dbReference type="PIRSF" id="PIRSF005963">
    <property type="entry name" value="Lipoyl_synth"/>
    <property type="match status" value="1"/>
</dbReference>
<dbReference type="SFLD" id="SFLDF00271">
    <property type="entry name" value="lipoyl_synthase"/>
    <property type="match status" value="1"/>
</dbReference>
<dbReference type="SFLD" id="SFLDG01058">
    <property type="entry name" value="lipoyl_synthase_like"/>
    <property type="match status" value="1"/>
</dbReference>
<dbReference type="SMART" id="SM00729">
    <property type="entry name" value="Elp3"/>
    <property type="match status" value="1"/>
</dbReference>
<dbReference type="SUPFAM" id="SSF102114">
    <property type="entry name" value="Radical SAM enzymes"/>
    <property type="match status" value="1"/>
</dbReference>
<dbReference type="PROSITE" id="PS51918">
    <property type="entry name" value="RADICAL_SAM"/>
    <property type="match status" value="1"/>
</dbReference>
<keyword id="KW-0004">4Fe-4S</keyword>
<keyword id="KW-0963">Cytoplasm</keyword>
<keyword id="KW-0408">Iron</keyword>
<keyword id="KW-0411">Iron-sulfur</keyword>
<keyword id="KW-0479">Metal-binding</keyword>
<keyword id="KW-0949">S-adenosyl-L-methionine</keyword>
<keyword id="KW-0808">Transferase</keyword>
<gene>
    <name evidence="1" type="primary">lipA</name>
    <name type="ordered locus">Clim_1213</name>
</gene>
<accession>B3ECK5</accession>
<comment type="function">
    <text evidence="1">Catalyzes the radical-mediated insertion of two sulfur atoms into the C-6 and C-8 positions of the octanoyl moiety bound to the lipoyl domains of lipoate-dependent enzymes, thereby converting the octanoylated domains into lipoylated derivatives.</text>
</comment>
<comment type="catalytic activity">
    <reaction evidence="1">
        <text>[[Fe-S] cluster scaffold protein carrying a second [4Fe-4S](2+) cluster] + N(6)-octanoyl-L-lysyl-[protein] + 2 oxidized [2Fe-2S]-[ferredoxin] + 2 S-adenosyl-L-methionine + 4 H(+) = [[Fe-S] cluster scaffold protein] + N(6)-[(R)-dihydrolipoyl]-L-lysyl-[protein] + 4 Fe(3+) + 2 hydrogen sulfide + 2 5'-deoxyadenosine + 2 L-methionine + 2 reduced [2Fe-2S]-[ferredoxin]</text>
        <dbReference type="Rhea" id="RHEA:16585"/>
        <dbReference type="Rhea" id="RHEA-COMP:9928"/>
        <dbReference type="Rhea" id="RHEA-COMP:10000"/>
        <dbReference type="Rhea" id="RHEA-COMP:10001"/>
        <dbReference type="Rhea" id="RHEA-COMP:10475"/>
        <dbReference type="Rhea" id="RHEA-COMP:14568"/>
        <dbReference type="Rhea" id="RHEA-COMP:14569"/>
        <dbReference type="ChEBI" id="CHEBI:15378"/>
        <dbReference type="ChEBI" id="CHEBI:17319"/>
        <dbReference type="ChEBI" id="CHEBI:29034"/>
        <dbReference type="ChEBI" id="CHEBI:29919"/>
        <dbReference type="ChEBI" id="CHEBI:33722"/>
        <dbReference type="ChEBI" id="CHEBI:33737"/>
        <dbReference type="ChEBI" id="CHEBI:33738"/>
        <dbReference type="ChEBI" id="CHEBI:57844"/>
        <dbReference type="ChEBI" id="CHEBI:59789"/>
        <dbReference type="ChEBI" id="CHEBI:78809"/>
        <dbReference type="ChEBI" id="CHEBI:83100"/>
        <dbReference type="EC" id="2.8.1.8"/>
    </reaction>
</comment>
<comment type="cofactor">
    <cofactor evidence="1">
        <name>[4Fe-4S] cluster</name>
        <dbReference type="ChEBI" id="CHEBI:49883"/>
    </cofactor>
    <text evidence="1">Binds 2 [4Fe-4S] clusters per subunit. One cluster is coordinated with 3 cysteines and an exchangeable S-adenosyl-L-methionine.</text>
</comment>
<comment type="pathway">
    <text evidence="1">Protein modification; protein lipoylation via endogenous pathway; protein N(6)-(lipoyl)lysine from octanoyl-[acyl-carrier-protein]: step 2/2.</text>
</comment>
<comment type="subcellular location">
    <subcellularLocation>
        <location evidence="1">Cytoplasm</location>
    </subcellularLocation>
</comment>
<comment type="similarity">
    <text evidence="1">Belongs to the radical SAM superfamily. Lipoyl synthase family.</text>
</comment>
<feature type="chain" id="PRO_1000099592" description="Lipoyl synthase">
    <location>
        <begin position="1"/>
        <end position="292"/>
    </location>
</feature>
<feature type="domain" description="Radical SAM core" evidence="2">
    <location>
        <begin position="50"/>
        <end position="266"/>
    </location>
</feature>
<feature type="binding site" evidence="1">
    <location>
        <position position="38"/>
    </location>
    <ligand>
        <name>[4Fe-4S] cluster</name>
        <dbReference type="ChEBI" id="CHEBI:49883"/>
        <label>1</label>
    </ligand>
</feature>
<feature type="binding site" evidence="1">
    <location>
        <position position="43"/>
    </location>
    <ligand>
        <name>[4Fe-4S] cluster</name>
        <dbReference type="ChEBI" id="CHEBI:49883"/>
        <label>1</label>
    </ligand>
</feature>
<feature type="binding site" evidence="1">
    <location>
        <position position="49"/>
    </location>
    <ligand>
        <name>[4Fe-4S] cluster</name>
        <dbReference type="ChEBI" id="CHEBI:49883"/>
        <label>1</label>
    </ligand>
</feature>
<feature type="binding site" evidence="1">
    <location>
        <position position="64"/>
    </location>
    <ligand>
        <name>[4Fe-4S] cluster</name>
        <dbReference type="ChEBI" id="CHEBI:49883"/>
        <label>2</label>
        <note>4Fe-4S-S-AdoMet</note>
    </ligand>
</feature>
<feature type="binding site" evidence="1">
    <location>
        <position position="68"/>
    </location>
    <ligand>
        <name>[4Fe-4S] cluster</name>
        <dbReference type="ChEBI" id="CHEBI:49883"/>
        <label>2</label>
        <note>4Fe-4S-S-AdoMet</note>
    </ligand>
</feature>
<feature type="binding site" evidence="1">
    <location>
        <position position="71"/>
    </location>
    <ligand>
        <name>[4Fe-4S] cluster</name>
        <dbReference type="ChEBI" id="CHEBI:49883"/>
        <label>2</label>
        <note>4Fe-4S-S-AdoMet</note>
    </ligand>
</feature>
<feature type="binding site" evidence="1">
    <location>
        <position position="277"/>
    </location>
    <ligand>
        <name>[4Fe-4S] cluster</name>
        <dbReference type="ChEBI" id="CHEBI:49883"/>
        <label>1</label>
    </ligand>
</feature>
<sequence length="292" mass="32542">MNRERQKKPEWLKLKLSTGEHFAATRQLLSGLRLNTVCRSAMCPNLQECWSKGTATFMLLGSVCTRTCRFCAVDKTVLPVPPDPEEPEKIALAVKSMSLKHVVLTSVNRDDLPDGGSGHWVSSIRSIRSLNPEVSIECLVPDFDGITANADRVMQEAPEVLNHNIETVPSLYPAVRPQADYRRSLELIERAKAVFRLSTKSGMMVGMGETGDEVAASLGDLRASRCDIVTIGQYLQPTAAHLPVNRYVTPDEFEEYKNRAESLGFRHVQSGPFVRSSYHAEEFVAARHIERC</sequence>
<organism>
    <name type="scientific">Chlorobium limicola (strain DSM 245 / NBRC 103803 / 6330)</name>
    <dbReference type="NCBI Taxonomy" id="290315"/>
    <lineage>
        <taxon>Bacteria</taxon>
        <taxon>Pseudomonadati</taxon>
        <taxon>Chlorobiota</taxon>
        <taxon>Chlorobiia</taxon>
        <taxon>Chlorobiales</taxon>
        <taxon>Chlorobiaceae</taxon>
        <taxon>Chlorobium/Pelodictyon group</taxon>
        <taxon>Chlorobium</taxon>
    </lineage>
</organism>
<name>LIPA_CHLL2</name>
<proteinExistence type="inferred from homology"/>